<gene>
    <name evidence="9" type="primary">nfya-1</name>
    <name evidence="9" type="ORF">T08D10.1</name>
</gene>
<proteinExistence type="evidence at protein level"/>
<accession>G5EEG1</accession>
<feature type="chain" id="PRO_0000450332" description="Nuclear transcription factor Y subunit nfya-1">
    <location>
        <begin position="1"/>
        <end position="482"/>
    </location>
</feature>
<feature type="DNA-binding region" description="NFYA/HAP2-type" evidence="1">
    <location>
        <begin position="336"/>
        <end position="361"/>
    </location>
</feature>
<feature type="region of interest" description="Disordered" evidence="2">
    <location>
        <begin position="1"/>
        <end position="160"/>
    </location>
</feature>
<feature type="region of interest" description="Disordered" evidence="2">
    <location>
        <begin position="344"/>
        <end position="414"/>
    </location>
</feature>
<feature type="short sequence motif" description="Subunit association domain (SAD)" evidence="1">
    <location>
        <begin position="306"/>
        <end position="329"/>
    </location>
</feature>
<feature type="compositionally biased region" description="Polar residues" evidence="2">
    <location>
        <begin position="72"/>
        <end position="93"/>
    </location>
</feature>
<feature type="compositionally biased region" description="Low complexity" evidence="2">
    <location>
        <begin position="94"/>
        <end position="110"/>
    </location>
</feature>
<feature type="compositionally biased region" description="Polar residues" evidence="2">
    <location>
        <begin position="126"/>
        <end position="135"/>
    </location>
</feature>
<feature type="compositionally biased region" description="Polar residues" evidence="2">
    <location>
        <begin position="144"/>
        <end position="160"/>
    </location>
</feature>
<feature type="compositionally biased region" description="Basic and acidic residues" evidence="2">
    <location>
        <begin position="353"/>
        <end position="362"/>
    </location>
</feature>
<feature type="compositionally biased region" description="Low complexity" evidence="2">
    <location>
        <begin position="363"/>
        <end position="375"/>
    </location>
</feature>
<feature type="mutagenesis site" description="In bp4; ectopic expression of the homeobox protein egl-5 in the head and mid-body regions." evidence="4">
    <location>
        <begin position="102"/>
        <end position="482"/>
    </location>
</feature>
<feature type="mutagenesis site" description="In bp5; ectopic expression of the homeobox protein egl-5 in the head and mid-body regions." evidence="4">
    <original>Q</original>
    <variation>K</variation>
    <location>
        <position position="107"/>
    </location>
</feature>
<reference evidence="8" key="1">
    <citation type="journal article" date="1998" name="Science">
        <title>Genome sequence of the nematode C. elegans: a platform for investigating biology.</title>
        <authorList>
            <consortium name="The C. elegans sequencing consortium"/>
        </authorList>
    </citation>
    <scope>NUCLEOTIDE SEQUENCE [LARGE SCALE GENOMIC DNA]</scope>
    <source>
        <strain evidence="8">Bristol N2</strain>
    </source>
</reference>
<reference evidence="6" key="2">
    <citation type="journal article" date="2005" name="J. Mol. Histol.">
        <title>Expression of the CCAAT-binding factor NF-Y in Caenorhabditis elegans.</title>
        <authorList>
            <person name="Franchini A."/>
            <person name="Imbriano C."/>
            <person name="Peruzzi E."/>
            <person name="Mantovani R."/>
            <person name="Ottaviani E."/>
        </authorList>
    </citation>
    <scope>TISSUE SPECIFICITY</scope>
    <scope>DEVELOPMENTAL STAGE</scope>
</reference>
<reference evidence="6" key="3">
    <citation type="journal article" date="2007" name="Dev. Biol.">
        <title>Transcription factor NFY globally represses the expression of the C. elegans Hox gene Abdominal-B homolog egl-5.</title>
        <authorList>
            <person name="Deng H."/>
            <person name="Sun Y."/>
            <person name="Zhang Y."/>
            <person name="Luo X."/>
            <person name="Hou W."/>
            <person name="Yan L."/>
            <person name="Chen Y."/>
            <person name="Tian E."/>
            <person name="Han J."/>
            <person name="Zhang H."/>
        </authorList>
    </citation>
    <scope>FUNCTION</scope>
    <scope>IDENTIFICATION IN NF-Y COMPLEX</scope>
    <scope>INTERACTION WITH NFYB-1; NFYC-1 AND MES-3</scope>
    <scope>SUBCELLULAR LOCATION</scope>
    <scope>TISSUE SPECIFICITY</scope>
    <scope>DEVELOPMENTAL STAGE</scope>
    <scope>DISRUPTION PHENOTYPE</scope>
    <scope>MUTAGENESIS OF 102-GLN--LEU-482 AND GLN-107</scope>
</reference>
<reference evidence="6" key="4">
    <citation type="journal article" date="2013" name="Dev. Biol.">
        <title>The NF-Y complex negatively regulates Caenorhabditis elegans tbx-2 expression.</title>
        <authorList>
            <person name="Milton A.C."/>
            <person name="Packard A.V."/>
            <person name="Clary L."/>
            <person name="Okkema P.G."/>
        </authorList>
    </citation>
    <scope>FUNCTION</scope>
    <scope>DISRUPTION PHENOTYPE</scope>
</reference>
<reference evidence="6" key="5">
    <citation type="journal article" date="2015" name="G3 (Bethesda)">
        <title>Caenorhabditis elegans TBX-2 Directly Regulates Its Own Expression in a Negative Autoregulatory Loop.</title>
        <authorList>
            <person name="Milton A.C."/>
            <person name="Okkema P.G."/>
        </authorList>
    </citation>
    <scope>FUNCTION</scope>
</reference>
<dbReference type="EMBL" id="BX284606">
    <property type="protein sequence ID" value="CAA90639.1"/>
    <property type="molecule type" value="Genomic_DNA"/>
</dbReference>
<dbReference type="PIR" id="T22754">
    <property type="entry name" value="T22754"/>
</dbReference>
<dbReference type="RefSeq" id="NP_509999.1">
    <property type="nucleotide sequence ID" value="NM_077598.5"/>
</dbReference>
<dbReference type="ComplexPortal" id="CPX-5666">
    <property type="entry name" value="CCAAT-binding factor complex, nfya-1 variant"/>
</dbReference>
<dbReference type="FunCoup" id="G5EEG1">
    <property type="interactions" value="269"/>
</dbReference>
<dbReference type="IntAct" id="G5EEG1">
    <property type="interactions" value="3"/>
</dbReference>
<dbReference type="MINT" id="G5EEG1"/>
<dbReference type="STRING" id="6239.T08D10.1.1"/>
<dbReference type="PaxDb" id="6239-T08D10.1"/>
<dbReference type="PeptideAtlas" id="G5EEG1"/>
<dbReference type="EnsemblMetazoa" id="T08D10.1.1">
    <property type="protein sequence ID" value="T08D10.1.1"/>
    <property type="gene ID" value="WBGene00011614"/>
</dbReference>
<dbReference type="GeneID" id="181368"/>
<dbReference type="KEGG" id="cel:CELE_T08D10.1"/>
<dbReference type="AGR" id="WB:WBGene00011614"/>
<dbReference type="CTD" id="181368"/>
<dbReference type="WormBase" id="T08D10.1">
    <property type="protein sequence ID" value="CE03642"/>
    <property type="gene ID" value="WBGene00011614"/>
    <property type="gene designation" value="nfya-1"/>
</dbReference>
<dbReference type="eggNOG" id="KOG1561">
    <property type="taxonomic scope" value="Eukaryota"/>
</dbReference>
<dbReference type="GeneTree" id="ENSGT00390000015714"/>
<dbReference type="HOGENOM" id="CLU_483342_0_0_1"/>
<dbReference type="InParanoid" id="G5EEG1"/>
<dbReference type="OMA" id="NCKLFQY"/>
<dbReference type="OrthoDB" id="1097733at2759"/>
<dbReference type="SignaLink" id="G5EEG1"/>
<dbReference type="PRO" id="PR:G5EEG1"/>
<dbReference type="Proteomes" id="UP000001940">
    <property type="component" value="Chromosome X"/>
</dbReference>
<dbReference type="Bgee" id="WBGene00011614">
    <property type="expression patterns" value="Expressed in embryo and 4 other cell types or tissues"/>
</dbReference>
<dbReference type="GO" id="GO:0016602">
    <property type="term" value="C:CCAAT-binding factor complex"/>
    <property type="evidence" value="ECO:0000353"/>
    <property type="project" value="ComplexPortal"/>
</dbReference>
<dbReference type="GO" id="GO:0005634">
    <property type="term" value="C:nucleus"/>
    <property type="evidence" value="ECO:0000314"/>
    <property type="project" value="WormBase"/>
</dbReference>
<dbReference type="GO" id="GO:0003677">
    <property type="term" value="F:DNA binding"/>
    <property type="evidence" value="ECO:0007669"/>
    <property type="project" value="UniProtKB-KW"/>
</dbReference>
<dbReference type="GO" id="GO:0000981">
    <property type="term" value="F:DNA-binding transcription factor activity, RNA polymerase II-specific"/>
    <property type="evidence" value="ECO:0000318"/>
    <property type="project" value="GO_Central"/>
</dbReference>
<dbReference type="GO" id="GO:0001217">
    <property type="term" value="F:DNA-binding transcription repressor activity"/>
    <property type="evidence" value="ECO:0000315"/>
    <property type="project" value="UniProtKB"/>
</dbReference>
<dbReference type="GO" id="GO:0000122">
    <property type="term" value="P:negative regulation of transcription by RNA polymerase II"/>
    <property type="evidence" value="ECO:0000315"/>
    <property type="project" value="UniProtKB"/>
</dbReference>
<dbReference type="GO" id="GO:0110039">
    <property type="term" value="P:positive regulation of nematode male tail tip morphogenesis"/>
    <property type="evidence" value="ECO:0000315"/>
    <property type="project" value="UniProtKB"/>
</dbReference>
<dbReference type="GO" id="GO:0010468">
    <property type="term" value="P:regulation of gene expression"/>
    <property type="evidence" value="ECO:0000315"/>
    <property type="project" value="UniProtKB"/>
</dbReference>
<dbReference type="GO" id="GO:0006357">
    <property type="term" value="P:regulation of transcription by RNA polymerase II"/>
    <property type="evidence" value="ECO:0000318"/>
    <property type="project" value="GO_Central"/>
</dbReference>
<dbReference type="GO" id="GO:0009888">
    <property type="term" value="P:tissue development"/>
    <property type="evidence" value="ECO:0000315"/>
    <property type="project" value="UniProtKB"/>
</dbReference>
<dbReference type="Gene3D" id="6.10.250.2430">
    <property type="match status" value="1"/>
</dbReference>
<dbReference type="InterPro" id="IPR001289">
    <property type="entry name" value="NFYA"/>
</dbReference>
<dbReference type="PANTHER" id="PTHR12632">
    <property type="entry name" value="TRANSCRIPTION FACTOR NF-Y ALPHA-RELATED"/>
    <property type="match status" value="1"/>
</dbReference>
<dbReference type="Pfam" id="PF02045">
    <property type="entry name" value="CBFB_NFYA"/>
    <property type="match status" value="1"/>
</dbReference>
<dbReference type="PRINTS" id="PR00616">
    <property type="entry name" value="CCAATSUBUNTB"/>
</dbReference>
<dbReference type="SMART" id="SM00521">
    <property type="entry name" value="CBF"/>
    <property type="match status" value="1"/>
</dbReference>
<dbReference type="PROSITE" id="PS51152">
    <property type="entry name" value="NFYA_HAP2_2"/>
    <property type="match status" value="1"/>
</dbReference>
<name>NFYA1_CAEEL</name>
<organism evidence="8">
    <name type="scientific">Caenorhabditis elegans</name>
    <dbReference type="NCBI Taxonomy" id="6239"/>
    <lineage>
        <taxon>Eukaryota</taxon>
        <taxon>Metazoa</taxon>
        <taxon>Ecdysozoa</taxon>
        <taxon>Nematoda</taxon>
        <taxon>Chromadorea</taxon>
        <taxon>Rhabditida</taxon>
        <taxon>Rhabditina</taxon>
        <taxon>Rhabditomorpha</taxon>
        <taxon>Rhabditoidea</taxon>
        <taxon>Rhabditidae</taxon>
        <taxon>Peloderinae</taxon>
        <taxon>Caenorhabditis</taxon>
    </lineage>
</organism>
<sequence>MNGASRGDVQRPTPVQAPAKRPIPPTVFRFEKASKIGTSLDTTPKELPIRRPVPLPGPRFVKDVNPSPPATSSPNVQTQCHQPPVVRSQTHQASVSQTTPTQTTPSQYTPASVSTARAPQFHRSSHVTPSQQQRIEQAFGPAPVSQSQPQNGSYIQYNEPSTSVASTTTSFYSPNESEPVFTHAISFKPNEPENGQKAREQLELLDSGKINEINQSKVPTTIELPPNCKLFQYSWVLDGIPRTLLVPMPMDATEEDVKAMLPKTLEMDSNLFNNARPRDELPVLSFPNGTVPNVEMIGPKVQQPMLVNPKQFNRIMRRREMRQQLEASGRLPLARQKYLHESRHLHALKRKRGLDGRFDNTKTAESSSMVSSTTSPRKLKRRNRLPGEETSDSSSIVLPSPVEIQPKGGIVNSSMPSTSTGYINNGMDHQTDYIEHQQPMSTYDQYHDHVQYIAPDGNVNYHNNHDNGVDLTGSDGQSFTNL</sequence>
<comment type="function">
    <text evidence="4 5 7">Component of the sequence-specific heterotrimeric transcription factor (nfya-1-NF-Y) which specifically recognizes a 5'-CCAAT-3' box motif found in the promoters of its target genes to regulate their expression and control cellular identity in particular tissue types (PubMed:17574230). In association with the components in the nfya-1-NF-Y complex, represses the expression of the T-box transcription factor tbx-2 throughout larval development, which most likely restricts its expression to certain tissues (PubMed:23933492). May act to repress txb-2 expression in conjunction with tbx-2 itself, which has an autoregulatory role (Probable). With the components in this complex, negatively regulates the expression of the homeobox protein egl-5 to spatially restrict its expression in tissues such as the head (PubMed:17574230). May regulate egl-5 expression in association with the mes-2-mes-3-mes-6 complex (PubMed:17574230).</text>
</comment>
<comment type="subunit">
    <text evidence="4">Forms a heterotrimeric transcription factor complex (nfya-1-NF-Y complex) composed of nfya-1, nfyb-1 and nfyc-1, which binds to 5'-CCAAT-3' box motif in the promoters of its target genes (PubMed:17574230). Interacts with the nfyb-1 and nfyc-1 dimer; the interaction is required for subsequent binding to the 5'-CCAAT-3' box motif in DNA (PubMed:17574230). Does not interact with either nfyb-1 or nfyc-1 in their monomeric form (PubMed:17574230). Interacts with mes-3 (PubMed:17574230).</text>
</comment>
<comment type="subcellular location">
    <subcellularLocation>
        <location evidence="4">Nucleus</location>
    </subcellularLocation>
</comment>
<comment type="tissue specificity">
    <text evidence="3 4">Expressed in certain parts of the gonads with high expression in fertilized oocytes in the uterus and mature oocytes from the distal to the proximal arm of the gonad, but weak expression in the syncytial ovaries and immature oocytes at the beginning of the proximal arm of the gonad (PubMed:15704008). Highly expressed in the head ganglia neurons and the developing hermaphrodite vulva and male tail (PubMed:17574230). Weakly expressed in most somatic cells (PubMed:17574230). Not expressed in the intestine, the hypodermis, body wall muscle surrounding the pseudocoelomic space, secretory cells in the pharyngeal terminal bulb wall, in the small ganglia surrounding the pharynx and in the neurons running anteriorly to the sensory organs in the head (PubMed:15704008).</text>
</comment>
<comment type="developmental stage">
    <text evidence="3 4">Expressed at all developmental stages (PubMed:15704008, PubMed:17574230). In larvae, highly expressed in the head ganglia neurons and the developing hermaphrodite vulva and male tail, while expression in most somatic cells is weak (PubMed:17574230). Not expressed in the gonads in larval stages (PubMed:15704008).</text>
</comment>
<comment type="disruption phenotype">
    <text evidence="4 5">RNAi-mediated knockdown results in ectopic expression of the homeobox protein egl-5 in the head region of hermaphrodites (PubMed:17574230). RNAi-mediated knockdown results in morphological defects in the male tail due to cell transformation defects whereby anterior seam cells adopt a posterior seam cell fate, which is indicated by ectopic expression of the ray-specific protein pkd-2 in the anterior mid-body region (PubMed:17574230). This leads to impaired cell identities of the rays derived from seam cells (PubMed:17574230). These animals also have defective cell transformations in the ventral cord and generate two extra serotonergic CP neurons (PubMed:17574230). RNAi-mediated knockdown results in ectopic expression of tbx-2 in the gut and seam cells of L4 stage larvae and adults (PubMed:23933492).</text>
</comment>
<comment type="similarity">
    <text evidence="1">Belongs to the NFYA/HAP2 subunit family.</text>
</comment>
<protein>
    <recommendedName>
        <fullName evidence="6">Nuclear transcription factor Y subunit nfya-1</fullName>
    </recommendedName>
    <alternativeName>
        <fullName evidence="6">CAAT box DNA-binding protein subunit nfya-1</fullName>
    </alternativeName>
</protein>
<evidence type="ECO:0000255" key="1">
    <source>
        <dbReference type="PROSITE-ProRule" id="PRU00966"/>
    </source>
</evidence>
<evidence type="ECO:0000256" key="2">
    <source>
        <dbReference type="SAM" id="MobiDB-lite"/>
    </source>
</evidence>
<evidence type="ECO:0000269" key="3">
    <source>
    </source>
</evidence>
<evidence type="ECO:0000269" key="4">
    <source>
    </source>
</evidence>
<evidence type="ECO:0000269" key="5">
    <source>
    </source>
</evidence>
<evidence type="ECO:0000305" key="6"/>
<evidence type="ECO:0000305" key="7">
    <source>
    </source>
</evidence>
<evidence type="ECO:0000312" key="8">
    <source>
        <dbReference type="Proteomes" id="UP000001940"/>
    </source>
</evidence>
<evidence type="ECO:0000312" key="9">
    <source>
        <dbReference type="WormBase" id="T08D10.1"/>
    </source>
</evidence>
<keyword id="KW-0238">DNA-binding</keyword>
<keyword id="KW-0539">Nucleus</keyword>
<keyword id="KW-1185">Reference proteome</keyword>
<keyword id="KW-0678">Repressor</keyword>
<keyword id="KW-0804">Transcription</keyword>
<keyword id="KW-0805">Transcription regulation</keyword>